<proteinExistence type="inferred from homology"/>
<reference key="1">
    <citation type="journal article" date="2007" name="Microbiology">
        <title>Comparative analysis of the Corynebacterium glutamicum group and complete genome sequence of strain R.</title>
        <authorList>
            <person name="Yukawa H."/>
            <person name="Omumasaba C.A."/>
            <person name="Nonaka H."/>
            <person name="Kos P."/>
            <person name="Okai N."/>
            <person name="Suzuki N."/>
            <person name="Suda M."/>
            <person name="Tsuge Y."/>
            <person name="Watanabe J."/>
            <person name="Ikeda Y."/>
            <person name="Vertes A.A."/>
            <person name="Inui M."/>
        </authorList>
    </citation>
    <scope>NUCLEOTIDE SEQUENCE [LARGE SCALE GENOMIC DNA]</scope>
    <source>
        <strain>R</strain>
    </source>
</reference>
<sequence>MTDPIEQAFERIRAEAMRRNGSVPDLNKNDAFRRPPAPKGGVEKRKKGRASGLDGRQKRYVRGAESLGSVLNKEIQRRGWGKDIAGGWVTSNWEELVGAKIAQHTRVEMIKDKKLFITCDSTAWATNLRMMQRQILQVIAEKVGPNIITELRIFGPQAPSWRKGPLHVKGRGPRDTYG</sequence>
<evidence type="ECO:0000255" key="1">
    <source>
        <dbReference type="HAMAP-Rule" id="MF_00630"/>
    </source>
</evidence>
<evidence type="ECO:0000256" key="2">
    <source>
        <dbReference type="SAM" id="MobiDB-lite"/>
    </source>
</evidence>
<accession>A4Q9S3</accession>
<protein>
    <recommendedName>
        <fullName evidence="1">UPF0232 protein cgR_0005</fullName>
    </recommendedName>
</protein>
<comment type="similarity">
    <text evidence="1">Belongs to the UPF0232 family.</text>
</comment>
<name>Y005_CORGB</name>
<feature type="chain" id="PRO_1000051697" description="UPF0232 protein cgR_0005">
    <location>
        <begin position="1"/>
        <end position="178"/>
    </location>
</feature>
<feature type="region of interest" description="Disordered" evidence="2">
    <location>
        <begin position="16"/>
        <end position="55"/>
    </location>
</feature>
<organism>
    <name type="scientific">Corynebacterium glutamicum (strain R)</name>
    <dbReference type="NCBI Taxonomy" id="340322"/>
    <lineage>
        <taxon>Bacteria</taxon>
        <taxon>Bacillati</taxon>
        <taxon>Actinomycetota</taxon>
        <taxon>Actinomycetes</taxon>
        <taxon>Mycobacteriales</taxon>
        <taxon>Corynebacteriaceae</taxon>
        <taxon>Corynebacterium</taxon>
    </lineage>
</organism>
<dbReference type="EMBL" id="AP009044">
    <property type="protein sequence ID" value="BAF52966.1"/>
    <property type="molecule type" value="Genomic_DNA"/>
</dbReference>
<dbReference type="RefSeq" id="WP_003855338.1">
    <property type="nucleotide sequence ID" value="NC_009342.1"/>
</dbReference>
<dbReference type="SMR" id="A4Q9S3"/>
<dbReference type="GeneID" id="1021292"/>
<dbReference type="KEGG" id="cgt:cgR_0005"/>
<dbReference type="HOGENOM" id="CLU_087206_1_1_11"/>
<dbReference type="PhylomeDB" id="A4Q9S3"/>
<dbReference type="Proteomes" id="UP000006698">
    <property type="component" value="Chromosome"/>
</dbReference>
<dbReference type="HAMAP" id="MF_00630">
    <property type="entry name" value="UPF0232"/>
    <property type="match status" value="1"/>
</dbReference>
<dbReference type="InterPro" id="IPR007922">
    <property type="entry name" value="DciA-like"/>
</dbReference>
<dbReference type="InterPro" id="IPR023007">
    <property type="entry name" value="UPF0232_actinobac"/>
</dbReference>
<dbReference type="NCBIfam" id="NF001031">
    <property type="entry name" value="PRK00111.1"/>
    <property type="match status" value="1"/>
</dbReference>
<dbReference type="PANTHER" id="PTHR36456">
    <property type="entry name" value="UPF0232 PROTEIN SCO3875"/>
    <property type="match status" value="1"/>
</dbReference>
<dbReference type="PANTHER" id="PTHR36456:SF1">
    <property type="entry name" value="UPF0232 PROTEIN SCO3875"/>
    <property type="match status" value="1"/>
</dbReference>
<dbReference type="Pfam" id="PF05258">
    <property type="entry name" value="DciA"/>
    <property type="match status" value="1"/>
</dbReference>
<gene>
    <name type="ordered locus">cgR_0005</name>
</gene>